<dbReference type="EC" id="2.8.1.4" evidence="1"/>
<dbReference type="EMBL" id="AE017245">
    <property type="protein sequence ID" value="AAZ43914.2"/>
    <property type="molecule type" value="Genomic_DNA"/>
</dbReference>
<dbReference type="RefSeq" id="WP_041352040.1">
    <property type="nucleotide sequence ID" value="NC_007294.1"/>
</dbReference>
<dbReference type="SMR" id="Q4A5Q7"/>
<dbReference type="STRING" id="262723.MS53_0505"/>
<dbReference type="KEGG" id="msy:MS53_0505"/>
<dbReference type="eggNOG" id="COG0301">
    <property type="taxonomic scope" value="Bacteria"/>
</dbReference>
<dbReference type="HOGENOM" id="CLU_037952_4_0_14"/>
<dbReference type="OrthoDB" id="9773948at2"/>
<dbReference type="UniPathway" id="UPA00060"/>
<dbReference type="Proteomes" id="UP000000549">
    <property type="component" value="Chromosome"/>
</dbReference>
<dbReference type="GO" id="GO:0005829">
    <property type="term" value="C:cytosol"/>
    <property type="evidence" value="ECO:0007669"/>
    <property type="project" value="TreeGrafter"/>
</dbReference>
<dbReference type="GO" id="GO:0005524">
    <property type="term" value="F:ATP binding"/>
    <property type="evidence" value="ECO:0007669"/>
    <property type="project" value="UniProtKB-UniRule"/>
</dbReference>
<dbReference type="GO" id="GO:0004810">
    <property type="term" value="F:CCA tRNA nucleotidyltransferase activity"/>
    <property type="evidence" value="ECO:0007669"/>
    <property type="project" value="InterPro"/>
</dbReference>
<dbReference type="GO" id="GO:0000049">
    <property type="term" value="F:tRNA binding"/>
    <property type="evidence" value="ECO:0007669"/>
    <property type="project" value="UniProtKB-UniRule"/>
</dbReference>
<dbReference type="GO" id="GO:0140741">
    <property type="term" value="F:tRNA-uracil-4 sulfurtransferase activity"/>
    <property type="evidence" value="ECO:0007669"/>
    <property type="project" value="UniProtKB-EC"/>
</dbReference>
<dbReference type="GO" id="GO:0009228">
    <property type="term" value="P:thiamine biosynthetic process"/>
    <property type="evidence" value="ECO:0007669"/>
    <property type="project" value="UniProtKB-KW"/>
</dbReference>
<dbReference type="GO" id="GO:0009229">
    <property type="term" value="P:thiamine diphosphate biosynthetic process"/>
    <property type="evidence" value="ECO:0007669"/>
    <property type="project" value="UniProtKB-UniRule"/>
</dbReference>
<dbReference type="GO" id="GO:0052837">
    <property type="term" value="P:thiazole biosynthetic process"/>
    <property type="evidence" value="ECO:0007669"/>
    <property type="project" value="TreeGrafter"/>
</dbReference>
<dbReference type="GO" id="GO:0002937">
    <property type="term" value="P:tRNA 4-thiouridine biosynthesis"/>
    <property type="evidence" value="ECO:0007669"/>
    <property type="project" value="TreeGrafter"/>
</dbReference>
<dbReference type="CDD" id="cd01712">
    <property type="entry name" value="PPase_ThiI"/>
    <property type="match status" value="1"/>
</dbReference>
<dbReference type="CDD" id="cd11716">
    <property type="entry name" value="THUMP_ThiI"/>
    <property type="match status" value="1"/>
</dbReference>
<dbReference type="Gene3D" id="3.30.2130.30">
    <property type="match status" value="1"/>
</dbReference>
<dbReference type="Gene3D" id="3.40.50.620">
    <property type="entry name" value="HUPs"/>
    <property type="match status" value="1"/>
</dbReference>
<dbReference type="HAMAP" id="MF_00021">
    <property type="entry name" value="ThiI"/>
    <property type="match status" value="1"/>
</dbReference>
<dbReference type="InterPro" id="IPR014729">
    <property type="entry name" value="Rossmann-like_a/b/a_fold"/>
</dbReference>
<dbReference type="InterPro" id="IPR020536">
    <property type="entry name" value="ThiI_AANH"/>
</dbReference>
<dbReference type="InterPro" id="IPR054173">
    <property type="entry name" value="ThiI_fer"/>
</dbReference>
<dbReference type="InterPro" id="IPR049961">
    <property type="entry name" value="ThiI_N"/>
</dbReference>
<dbReference type="InterPro" id="IPR004114">
    <property type="entry name" value="THUMP_dom"/>
</dbReference>
<dbReference type="InterPro" id="IPR049962">
    <property type="entry name" value="THUMP_ThiI"/>
</dbReference>
<dbReference type="InterPro" id="IPR003720">
    <property type="entry name" value="tRNA_STrfase"/>
</dbReference>
<dbReference type="InterPro" id="IPR050102">
    <property type="entry name" value="tRNA_sulfurtransferase_ThiI"/>
</dbReference>
<dbReference type="NCBIfam" id="TIGR00342">
    <property type="entry name" value="tRNA uracil 4-sulfurtransferase ThiI"/>
    <property type="match status" value="1"/>
</dbReference>
<dbReference type="PANTHER" id="PTHR43209">
    <property type="entry name" value="TRNA SULFURTRANSFERASE"/>
    <property type="match status" value="1"/>
</dbReference>
<dbReference type="PANTHER" id="PTHR43209:SF1">
    <property type="entry name" value="TRNA SULFURTRANSFERASE"/>
    <property type="match status" value="1"/>
</dbReference>
<dbReference type="Pfam" id="PF02568">
    <property type="entry name" value="ThiI"/>
    <property type="match status" value="1"/>
</dbReference>
<dbReference type="Pfam" id="PF22025">
    <property type="entry name" value="ThiI_fer"/>
    <property type="match status" value="1"/>
</dbReference>
<dbReference type="Pfam" id="PF02926">
    <property type="entry name" value="THUMP"/>
    <property type="match status" value="1"/>
</dbReference>
<dbReference type="SMART" id="SM00981">
    <property type="entry name" value="THUMP"/>
    <property type="match status" value="1"/>
</dbReference>
<dbReference type="SUPFAM" id="SSF52402">
    <property type="entry name" value="Adenine nucleotide alpha hydrolases-like"/>
    <property type="match status" value="1"/>
</dbReference>
<dbReference type="SUPFAM" id="SSF143437">
    <property type="entry name" value="THUMP domain-like"/>
    <property type="match status" value="1"/>
</dbReference>
<dbReference type="PROSITE" id="PS51165">
    <property type="entry name" value="THUMP"/>
    <property type="match status" value="1"/>
</dbReference>
<sequence>MYKKILIRYGELVLKGKNRTTFIKQLGSNIKEILNTEYEMEFDRMYIPYSEENLKNLKYVFGISSFSPVIETNKNLEDIQSAITKLINKNASTFKIAARRNDKSFELNSDQLNNLLGGFVLKNSHLKVNVKNPDQIFNIEIRKNSVYVFDKSINGIGGIPVGISGKVLHLISGGFDSPVAAYLLMKRGFKVDFLTFVTPPQTDETTIDKIKNLTKVLSRYQKESNLYVCDFSLISSYIEFTEFKSFKIILMRRSFYRIASELAKQNEILMISNGENLAQVASQTNESMAVIGSSIKNEILRPLLTYDKNEIINLSKVIETHDISILKSKEACELFAPKNPVTKPTEAKTLRIESKLDELKTYEEIVLNQKMKKFAI</sequence>
<gene>
    <name evidence="1" type="primary">thiI</name>
    <name type="ordered locus">MS53_0505</name>
</gene>
<keyword id="KW-0067">ATP-binding</keyword>
<keyword id="KW-0963">Cytoplasm</keyword>
<keyword id="KW-0547">Nucleotide-binding</keyword>
<keyword id="KW-1185">Reference proteome</keyword>
<keyword id="KW-0694">RNA-binding</keyword>
<keyword id="KW-0784">Thiamine biosynthesis</keyword>
<keyword id="KW-0808">Transferase</keyword>
<keyword id="KW-0820">tRNA-binding</keyword>
<proteinExistence type="inferred from homology"/>
<feature type="chain" id="PRO_1000074246" description="Probable tRNA sulfurtransferase">
    <location>
        <begin position="1"/>
        <end position="376"/>
    </location>
</feature>
<feature type="domain" description="THUMP" evidence="1">
    <location>
        <begin position="51"/>
        <end position="152"/>
    </location>
</feature>
<feature type="binding site" evidence="1">
    <location>
        <begin position="170"/>
        <end position="171"/>
    </location>
    <ligand>
        <name>ATP</name>
        <dbReference type="ChEBI" id="CHEBI:30616"/>
    </ligand>
</feature>
<feature type="binding site" evidence="1">
    <location>
        <begin position="195"/>
        <end position="196"/>
    </location>
    <ligand>
        <name>ATP</name>
        <dbReference type="ChEBI" id="CHEBI:30616"/>
    </ligand>
</feature>
<feature type="binding site" evidence="1">
    <location>
        <position position="252"/>
    </location>
    <ligand>
        <name>ATP</name>
        <dbReference type="ChEBI" id="CHEBI:30616"/>
    </ligand>
</feature>
<feature type="binding site" evidence="1">
    <location>
        <position position="274"/>
    </location>
    <ligand>
        <name>ATP</name>
        <dbReference type="ChEBI" id="CHEBI:30616"/>
    </ligand>
</feature>
<feature type="binding site" evidence="1">
    <location>
        <position position="283"/>
    </location>
    <ligand>
        <name>ATP</name>
        <dbReference type="ChEBI" id="CHEBI:30616"/>
    </ligand>
</feature>
<name>THII_MYCS5</name>
<accession>Q4A5Q7</accession>
<protein>
    <recommendedName>
        <fullName evidence="1">Probable tRNA sulfurtransferase</fullName>
        <ecNumber evidence="1">2.8.1.4</ecNumber>
    </recommendedName>
    <alternativeName>
        <fullName evidence="1">Sulfur carrier protein ThiS sulfurtransferase</fullName>
    </alternativeName>
    <alternativeName>
        <fullName evidence="1">Thiamine biosynthesis protein ThiI</fullName>
    </alternativeName>
    <alternativeName>
        <fullName evidence="1">tRNA 4-thiouridine synthase</fullName>
    </alternativeName>
</protein>
<organism>
    <name type="scientific">Mycoplasmopsis synoviae (strain 53)</name>
    <name type="common">Mycoplasma synoviae</name>
    <dbReference type="NCBI Taxonomy" id="262723"/>
    <lineage>
        <taxon>Bacteria</taxon>
        <taxon>Bacillati</taxon>
        <taxon>Mycoplasmatota</taxon>
        <taxon>Mycoplasmoidales</taxon>
        <taxon>Metamycoplasmataceae</taxon>
        <taxon>Mycoplasmopsis</taxon>
    </lineage>
</organism>
<evidence type="ECO:0000255" key="1">
    <source>
        <dbReference type="HAMAP-Rule" id="MF_00021"/>
    </source>
</evidence>
<comment type="function">
    <text evidence="1">Catalyzes the ATP-dependent transfer of a sulfur to tRNA to produce 4-thiouridine in position 8 of tRNAs, which functions as a near-UV photosensor. Also catalyzes the transfer of sulfur to the sulfur carrier protein ThiS, forming ThiS-thiocarboxylate. This is a step in the synthesis of thiazole, in the thiamine biosynthesis pathway. The sulfur is donated as persulfide by IscS.</text>
</comment>
<comment type="catalytic activity">
    <reaction evidence="1">
        <text>[ThiI sulfur-carrier protein]-S-sulfanyl-L-cysteine + a uridine in tRNA + 2 reduced [2Fe-2S]-[ferredoxin] + ATP + H(+) = [ThiI sulfur-carrier protein]-L-cysteine + a 4-thiouridine in tRNA + 2 oxidized [2Fe-2S]-[ferredoxin] + AMP + diphosphate</text>
        <dbReference type="Rhea" id="RHEA:24176"/>
        <dbReference type="Rhea" id="RHEA-COMP:10000"/>
        <dbReference type="Rhea" id="RHEA-COMP:10001"/>
        <dbReference type="Rhea" id="RHEA-COMP:13337"/>
        <dbReference type="Rhea" id="RHEA-COMP:13338"/>
        <dbReference type="Rhea" id="RHEA-COMP:13339"/>
        <dbReference type="Rhea" id="RHEA-COMP:13340"/>
        <dbReference type="ChEBI" id="CHEBI:15378"/>
        <dbReference type="ChEBI" id="CHEBI:29950"/>
        <dbReference type="ChEBI" id="CHEBI:30616"/>
        <dbReference type="ChEBI" id="CHEBI:33019"/>
        <dbReference type="ChEBI" id="CHEBI:33737"/>
        <dbReference type="ChEBI" id="CHEBI:33738"/>
        <dbReference type="ChEBI" id="CHEBI:61963"/>
        <dbReference type="ChEBI" id="CHEBI:65315"/>
        <dbReference type="ChEBI" id="CHEBI:136798"/>
        <dbReference type="ChEBI" id="CHEBI:456215"/>
        <dbReference type="EC" id="2.8.1.4"/>
    </reaction>
</comment>
<comment type="catalytic activity">
    <reaction evidence="1">
        <text>[ThiS sulfur-carrier protein]-C-terminal Gly-Gly-AMP + S-sulfanyl-L-cysteinyl-[cysteine desulfurase] + AH2 = [ThiS sulfur-carrier protein]-C-terminal-Gly-aminoethanethioate + L-cysteinyl-[cysteine desulfurase] + A + AMP + 2 H(+)</text>
        <dbReference type="Rhea" id="RHEA:43340"/>
        <dbReference type="Rhea" id="RHEA-COMP:12157"/>
        <dbReference type="Rhea" id="RHEA-COMP:12158"/>
        <dbReference type="Rhea" id="RHEA-COMP:12910"/>
        <dbReference type="Rhea" id="RHEA-COMP:19908"/>
        <dbReference type="ChEBI" id="CHEBI:13193"/>
        <dbReference type="ChEBI" id="CHEBI:15378"/>
        <dbReference type="ChEBI" id="CHEBI:17499"/>
        <dbReference type="ChEBI" id="CHEBI:29950"/>
        <dbReference type="ChEBI" id="CHEBI:61963"/>
        <dbReference type="ChEBI" id="CHEBI:90618"/>
        <dbReference type="ChEBI" id="CHEBI:232372"/>
        <dbReference type="ChEBI" id="CHEBI:456215"/>
    </reaction>
</comment>
<comment type="pathway">
    <text evidence="1">Cofactor biosynthesis; thiamine diphosphate biosynthesis.</text>
</comment>
<comment type="subcellular location">
    <subcellularLocation>
        <location evidence="1">Cytoplasm</location>
    </subcellularLocation>
</comment>
<comment type="similarity">
    <text evidence="1">Belongs to the ThiI family.</text>
</comment>
<reference key="1">
    <citation type="journal article" date="2005" name="J. Bacteriol.">
        <title>Swine and poultry pathogens: the complete genome sequences of two strains of Mycoplasma hyopneumoniae and a strain of Mycoplasma synoviae.</title>
        <authorList>
            <person name="Vasconcelos A.T.R."/>
            <person name="Ferreira H.B."/>
            <person name="Bizarro C.V."/>
            <person name="Bonatto S.L."/>
            <person name="Carvalho M.O."/>
            <person name="Pinto P.M."/>
            <person name="Almeida D.F."/>
            <person name="Almeida L.G.P."/>
            <person name="Almeida R."/>
            <person name="Alves-Junior L."/>
            <person name="Assuncao E.N."/>
            <person name="Azevedo V.A.C."/>
            <person name="Bogo M.R."/>
            <person name="Brigido M.M."/>
            <person name="Brocchi M."/>
            <person name="Burity H.A."/>
            <person name="Camargo A.A."/>
            <person name="Camargo S.S."/>
            <person name="Carepo M.S."/>
            <person name="Carraro D.M."/>
            <person name="de Mattos Cascardo J.C."/>
            <person name="Castro L.A."/>
            <person name="Cavalcanti G."/>
            <person name="Chemale G."/>
            <person name="Collevatti R.G."/>
            <person name="Cunha C.W."/>
            <person name="Dallagiovanna B."/>
            <person name="Dambros B.P."/>
            <person name="Dellagostin O.A."/>
            <person name="Falcao C."/>
            <person name="Fantinatti-Garboggini F."/>
            <person name="Felipe M.S.S."/>
            <person name="Fiorentin L."/>
            <person name="Franco G.R."/>
            <person name="Freitas N.S.A."/>
            <person name="Frias D."/>
            <person name="Grangeiro T.B."/>
            <person name="Grisard E.C."/>
            <person name="Guimaraes C.T."/>
            <person name="Hungria M."/>
            <person name="Jardim S.N."/>
            <person name="Krieger M.A."/>
            <person name="Laurino J.P."/>
            <person name="Lima L.F.A."/>
            <person name="Lopes M.I."/>
            <person name="Loreto E.L.S."/>
            <person name="Madeira H.M.F."/>
            <person name="Manfio G.P."/>
            <person name="Maranhao A.Q."/>
            <person name="Martinkovics C.T."/>
            <person name="Medeiros S.R.B."/>
            <person name="Moreira M.A.M."/>
            <person name="Neiva M."/>
            <person name="Ramalho-Neto C.E."/>
            <person name="Nicolas M.F."/>
            <person name="Oliveira S.C."/>
            <person name="Paixao R.F.C."/>
            <person name="Pedrosa F.O."/>
            <person name="Pena S.D.J."/>
            <person name="Pereira M."/>
            <person name="Pereira-Ferrari L."/>
            <person name="Piffer I."/>
            <person name="Pinto L.S."/>
            <person name="Potrich D.P."/>
            <person name="Salim A.C.M."/>
            <person name="Santos F.R."/>
            <person name="Schmitt R."/>
            <person name="Schneider M.P.C."/>
            <person name="Schrank A."/>
            <person name="Schrank I.S."/>
            <person name="Schuck A.F."/>
            <person name="Seuanez H.N."/>
            <person name="Silva D.W."/>
            <person name="Silva R."/>
            <person name="Silva S.C."/>
            <person name="Soares C.M.A."/>
            <person name="Souza K.R.L."/>
            <person name="Souza R.C."/>
            <person name="Staats C.C."/>
            <person name="Steffens M.B.R."/>
            <person name="Teixeira S.M.R."/>
            <person name="Urmenyi T.P."/>
            <person name="Vainstein M.H."/>
            <person name="Zuccherato L.W."/>
            <person name="Simpson A.J.G."/>
            <person name="Zaha A."/>
        </authorList>
    </citation>
    <scope>NUCLEOTIDE SEQUENCE [LARGE SCALE GENOMIC DNA]</scope>
    <source>
        <strain>53</strain>
    </source>
</reference>